<dbReference type="EMBL" id="CP000029">
    <property type="protein sequence ID" value="AAW55045.1"/>
    <property type="molecule type" value="Genomic_DNA"/>
</dbReference>
<dbReference type="RefSeq" id="WP_001829931.1">
    <property type="nucleotide sequence ID" value="NC_002976.3"/>
</dbReference>
<dbReference type="SMR" id="Q5HME6"/>
<dbReference type="STRING" id="176279.SERP1682"/>
<dbReference type="GeneID" id="50018226"/>
<dbReference type="KEGG" id="ser:SERP1682"/>
<dbReference type="eggNOG" id="ENOG50305BV">
    <property type="taxonomic scope" value="Bacteria"/>
</dbReference>
<dbReference type="HOGENOM" id="CLU_3012108_0_0_9"/>
<dbReference type="Proteomes" id="UP000000531">
    <property type="component" value="Chromosome"/>
</dbReference>
<dbReference type="GO" id="GO:0006355">
    <property type="term" value="P:regulation of DNA-templated transcription"/>
    <property type="evidence" value="ECO:0007669"/>
    <property type="project" value="InterPro"/>
</dbReference>
<dbReference type="Gene3D" id="1.10.1220.10">
    <property type="entry name" value="Met repressor-like"/>
    <property type="match status" value="1"/>
</dbReference>
<dbReference type="InterPro" id="IPR013321">
    <property type="entry name" value="Arc_rbn_hlx_hlx"/>
</dbReference>
<dbReference type="InterPro" id="IPR048242">
    <property type="entry name" value="MazE"/>
</dbReference>
<dbReference type="NCBIfam" id="NF041459">
    <property type="entry name" value="antitoxMazE_Staph"/>
    <property type="match status" value="1"/>
</dbReference>
<protein>
    <recommendedName>
        <fullName>Antitoxin MazE</fullName>
    </recommendedName>
</protein>
<reference key="1">
    <citation type="journal article" date="2005" name="J. Bacteriol.">
        <title>Insights on evolution of virulence and resistance from the complete genome analysis of an early methicillin-resistant Staphylococcus aureus strain and a biofilm-producing methicillin-resistant Staphylococcus epidermidis strain.</title>
        <authorList>
            <person name="Gill S.R."/>
            <person name="Fouts D.E."/>
            <person name="Archer G.L."/>
            <person name="Mongodin E.F."/>
            <person name="DeBoy R.T."/>
            <person name="Ravel J."/>
            <person name="Paulsen I.T."/>
            <person name="Kolonay J.F."/>
            <person name="Brinkac L.M."/>
            <person name="Beanan M.J."/>
            <person name="Dodson R.J."/>
            <person name="Daugherty S.C."/>
            <person name="Madupu R."/>
            <person name="Angiuoli S.V."/>
            <person name="Durkin A.S."/>
            <person name="Haft D.H."/>
            <person name="Vamathevan J.J."/>
            <person name="Khouri H."/>
            <person name="Utterback T.R."/>
            <person name="Lee C."/>
            <person name="Dimitrov G."/>
            <person name="Jiang L."/>
            <person name="Qin H."/>
            <person name="Weidman J."/>
            <person name="Tran K."/>
            <person name="Kang K.H."/>
            <person name="Hance I.R."/>
            <person name="Nelson K.E."/>
            <person name="Fraser C.M."/>
        </authorList>
    </citation>
    <scope>NUCLEOTIDE SEQUENCE [LARGE SCALE GENOMIC DNA]</scope>
    <source>
        <strain>ATCC 35984 / DSM 28319 / BCRC 17069 / CCUG 31568 / BM 3577 / RP62A</strain>
    </source>
</reference>
<sequence length="56" mass="6290">MLSFNQNRNHSLEQSLKEGYAQMADLNLSLATEAFPIECEACDCNESHLISNSKNE</sequence>
<organism>
    <name type="scientific">Staphylococcus epidermidis (strain ATCC 35984 / DSM 28319 / BCRC 17069 / CCUG 31568 / BM 3577 / RP62A)</name>
    <dbReference type="NCBI Taxonomy" id="176279"/>
    <lineage>
        <taxon>Bacteria</taxon>
        <taxon>Bacillati</taxon>
        <taxon>Bacillota</taxon>
        <taxon>Bacilli</taxon>
        <taxon>Bacillales</taxon>
        <taxon>Staphylococcaceae</taxon>
        <taxon>Staphylococcus</taxon>
    </lineage>
</organism>
<evidence type="ECO:0000250" key="1">
    <source>
        <dbReference type="UniProtKB" id="P0C7B4"/>
    </source>
</evidence>
<evidence type="ECO:0000305" key="2"/>
<name>MAZE_STAEQ</name>
<feature type="chain" id="PRO_0000330722" description="Antitoxin MazE">
    <location>
        <begin position="1"/>
        <end position="56"/>
    </location>
</feature>
<gene>
    <name type="primary">mazE</name>
    <name type="ordered locus">SERP1682</name>
</gene>
<keyword id="KW-1185">Reference proteome</keyword>
<keyword id="KW-1277">Toxin-antitoxin system</keyword>
<accession>Q5HME6</accession>
<comment type="function">
    <text evidence="1">Antitoxin component of a type II toxin-antitoxin (TA) system. Labile antitoxin that binds to cognate MazF toxin and counteracts its endoribonuclease activity.</text>
</comment>
<comment type="subunit">
    <text evidence="1">Forms a complex with cognate toxin MazF which inhibits the endoribonuclease activity of MazF.</text>
</comment>
<comment type="similarity">
    <text evidence="2">Belongs to the MazE/EndoAI family.</text>
</comment>
<proteinExistence type="inferred from homology"/>